<dbReference type="EC" id="3.1.3.16"/>
<dbReference type="EMBL" id="AC007583">
    <property type="protein sequence ID" value="AAF75095.1"/>
    <property type="molecule type" value="Genomic_DNA"/>
</dbReference>
<dbReference type="EMBL" id="CP002684">
    <property type="protein sequence ID" value="AEE28151.1"/>
    <property type="molecule type" value="Genomic_DNA"/>
</dbReference>
<dbReference type="EMBL" id="AF361615">
    <property type="protein sequence ID" value="AAK32783.1"/>
    <property type="status" value="ALT_FRAME"/>
    <property type="molecule type" value="mRNA"/>
</dbReference>
<dbReference type="EMBL" id="AY133603">
    <property type="protein sequence ID" value="AAM91433.1"/>
    <property type="status" value="ALT_FRAME"/>
    <property type="molecule type" value="mRNA"/>
</dbReference>
<dbReference type="EMBL" id="AY084887">
    <property type="protein sequence ID" value="AAM61450.1"/>
    <property type="molecule type" value="mRNA"/>
</dbReference>
<dbReference type="PIR" id="G86210">
    <property type="entry name" value="G86210"/>
</dbReference>
<dbReference type="RefSeq" id="NP_563791.1">
    <property type="nucleotide sequence ID" value="NM_100636.3"/>
</dbReference>
<dbReference type="SMR" id="Q9LQN6"/>
<dbReference type="FunCoup" id="Q9LQN6">
    <property type="interactions" value="964"/>
</dbReference>
<dbReference type="STRING" id="3702.Q9LQN6"/>
<dbReference type="iPTMnet" id="Q9LQN6"/>
<dbReference type="PaxDb" id="3702-AT1G07630.1"/>
<dbReference type="ProteomicsDB" id="248699"/>
<dbReference type="EnsemblPlants" id="AT1G07630.1">
    <property type="protein sequence ID" value="AT1G07630.1"/>
    <property type="gene ID" value="AT1G07630"/>
</dbReference>
<dbReference type="GeneID" id="837276"/>
<dbReference type="Gramene" id="AT1G07630.1">
    <property type="protein sequence ID" value="AT1G07630.1"/>
    <property type="gene ID" value="AT1G07630"/>
</dbReference>
<dbReference type="KEGG" id="ath:AT1G07630"/>
<dbReference type="Araport" id="AT1G07630"/>
<dbReference type="TAIR" id="AT1G07630">
    <property type="gene designation" value="PLL5"/>
</dbReference>
<dbReference type="eggNOG" id="KOG0700">
    <property type="taxonomic scope" value="Eukaryota"/>
</dbReference>
<dbReference type="HOGENOM" id="CLU_013173_12_1_1"/>
<dbReference type="InParanoid" id="Q9LQN6"/>
<dbReference type="OMA" id="INEETMM"/>
<dbReference type="OrthoDB" id="420076at2759"/>
<dbReference type="PhylomeDB" id="Q9LQN6"/>
<dbReference type="PRO" id="PR:Q9LQN6"/>
<dbReference type="Proteomes" id="UP000006548">
    <property type="component" value="Chromosome 1"/>
</dbReference>
<dbReference type="ExpressionAtlas" id="Q9LQN6">
    <property type="expression patterns" value="baseline and differential"/>
</dbReference>
<dbReference type="GO" id="GO:0005634">
    <property type="term" value="C:nucleus"/>
    <property type="evidence" value="ECO:0007669"/>
    <property type="project" value="UniProtKB-SubCell"/>
</dbReference>
<dbReference type="GO" id="GO:0046872">
    <property type="term" value="F:metal ion binding"/>
    <property type="evidence" value="ECO:0007669"/>
    <property type="project" value="UniProtKB-KW"/>
</dbReference>
<dbReference type="GO" id="GO:0004722">
    <property type="term" value="F:protein serine/threonine phosphatase activity"/>
    <property type="evidence" value="ECO:0007669"/>
    <property type="project" value="UniProtKB-EC"/>
</dbReference>
<dbReference type="GO" id="GO:0048366">
    <property type="term" value="P:leaf development"/>
    <property type="evidence" value="ECO:0000315"/>
    <property type="project" value="TAIR"/>
</dbReference>
<dbReference type="CDD" id="cd00143">
    <property type="entry name" value="PP2Cc"/>
    <property type="match status" value="1"/>
</dbReference>
<dbReference type="FunFam" id="3.60.40.10:FF:000050">
    <property type="entry name" value="probable protein phosphatase 2C 4"/>
    <property type="match status" value="1"/>
</dbReference>
<dbReference type="Gene3D" id="3.60.40.10">
    <property type="entry name" value="PPM-type phosphatase domain"/>
    <property type="match status" value="1"/>
</dbReference>
<dbReference type="InterPro" id="IPR015655">
    <property type="entry name" value="PP2C"/>
</dbReference>
<dbReference type="InterPro" id="IPR036457">
    <property type="entry name" value="PPM-type-like_dom_sf"/>
</dbReference>
<dbReference type="InterPro" id="IPR001932">
    <property type="entry name" value="PPM-type_phosphatase-like_dom"/>
</dbReference>
<dbReference type="PANTHER" id="PTHR13832">
    <property type="entry name" value="PROTEIN PHOSPHATASE 2C"/>
    <property type="match status" value="1"/>
</dbReference>
<dbReference type="PANTHER" id="PTHR13832:SF858">
    <property type="entry name" value="PROTEIN PHOSPHATASE 2C 4-RELATED"/>
    <property type="match status" value="1"/>
</dbReference>
<dbReference type="Pfam" id="PF00481">
    <property type="entry name" value="PP2C"/>
    <property type="match status" value="2"/>
</dbReference>
<dbReference type="SMART" id="SM00332">
    <property type="entry name" value="PP2Cc"/>
    <property type="match status" value="1"/>
</dbReference>
<dbReference type="SUPFAM" id="SSF81606">
    <property type="entry name" value="PP2C-like"/>
    <property type="match status" value="1"/>
</dbReference>
<dbReference type="PROSITE" id="PS51746">
    <property type="entry name" value="PPM_2"/>
    <property type="match status" value="1"/>
</dbReference>
<keyword id="KW-0217">Developmental protein</keyword>
<keyword id="KW-0378">Hydrolase</keyword>
<keyword id="KW-0460">Magnesium</keyword>
<keyword id="KW-0464">Manganese</keyword>
<keyword id="KW-0479">Metal-binding</keyword>
<keyword id="KW-0539">Nucleus</keyword>
<keyword id="KW-0597">Phosphoprotein</keyword>
<keyword id="KW-0904">Protein phosphatase</keyword>
<keyword id="KW-1185">Reference proteome</keyword>
<evidence type="ECO:0000250" key="1"/>
<evidence type="ECO:0000250" key="2">
    <source>
        <dbReference type="UniProtKB" id="Q8RWN7"/>
    </source>
</evidence>
<evidence type="ECO:0000255" key="3">
    <source>
        <dbReference type="PROSITE-ProRule" id="PRU01082"/>
    </source>
</evidence>
<evidence type="ECO:0000269" key="4">
    <source>
    </source>
</evidence>
<evidence type="ECO:0000305" key="5"/>
<name>P2C04_ARATH</name>
<accession>Q9LQN6</accession>
<accession>Q8LFF0</accession>
<accession>Q9ASX4</accession>
<proteinExistence type="evidence at transcript level"/>
<organism>
    <name type="scientific">Arabidopsis thaliana</name>
    <name type="common">Mouse-ear cress</name>
    <dbReference type="NCBI Taxonomy" id="3702"/>
    <lineage>
        <taxon>Eukaryota</taxon>
        <taxon>Viridiplantae</taxon>
        <taxon>Streptophyta</taxon>
        <taxon>Embryophyta</taxon>
        <taxon>Tracheophyta</taxon>
        <taxon>Spermatophyta</taxon>
        <taxon>Magnoliopsida</taxon>
        <taxon>eudicotyledons</taxon>
        <taxon>Gunneridae</taxon>
        <taxon>Pentapetalae</taxon>
        <taxon>rosids</taxon>
        <taxon>malvids</taxon>
        <taxon>Brassicales</taxon>
        <taxon>Brassicaceae</taxon>
        <taxon>Camelineae</taxon>
        <taxon>Arabidopsis</taxon>
    </lineage>
</organism>
<comment type="function">
    <text evidence="4">Involved in leaf development regulation.</text>
</comment>
<comment type="catalytic activity">
    <reaction>
        <text>O-phospho-L-seryl-[protein] + H2O = L-seryl-[protein] + phosphate</text>
        <dbReference type="Rhea" id="RHEA:20629"/>
        <dbReference type="Rhea" id="RHEA-COMP:9863"/>
        <dbReference type="Rhea" id="RHEA-COMP:11604"/>
        <dbReference type="ChEBI" id="CHEBI:15377"/>
        <dbReference type="ChEBI" id="CHEBI:29999"/>
        <dbReference type="ChEBI" id="CHEBI:43474"/>
        <dbReference type="ChEBI" id="CHEBI:83421"/>
        <dbReference type="EC" id="3.1.3.16"/>
    </reaction>
</comment>
<comment type="catalytic activity">
    <reaction>
        <text>O-phospho-L-threonyl-[protein] + H2O = L-threonyl-[protein] + phosphate</text>
        <dbReference type="Rhea" id="RHEA:47004"/>
        <dbReference type="Rhea" id="RHEA-COMP:11060"/>
        <dbReference type="Rhea" id="RHEA-COMP:11605"/>
        <dbReference type="ChEBI" id="CHEBI:15377"/>
        <dbReference type="ChEBI" id="CHEBI:30013"/>
        <dbReference type="ChEBI" id="CHEBI:43474"/>
        <dbReference type="ChEBI" id="CHEBI:61977"/>
        <dbReference type="EC" id="3.1.3.16"/>
    </reaction>
</comment>
<comment type="cofactor">
    <cofactor evidence="1">
        <name>Mg(2+)</name>
        <dbReference type="ChEBI" id="CHEBI:18420"/>
    </cofactor>
    <cofactor evidence="1">
        <name>Mn(2+)</name>
        <dbReference type="ChEBI" id="CHEBI:29035"/>
    </cofactor>
    <text evidence="1">Binds 2 magnesium or manganese ions per subunit.</text>
</comment>
<comment type="subcellular location">
    <subcellularLocation>
        <location evidence="5">Nucleus</location>
    </subcellularLocation>
</comment>
<comment type="tissue specificity">
    <text evidence="4">Expressed in seedlings, roots, leaves, stems, young inflorescences, flowers and siliques.</text>
</comment>
<comment type="domain">
    <text>The conserved PP2C phosphatase domain (250-651) is interrupted by an insertion of approximately 100 amino acids.</text>
</comment>
<comment type="disruption phenotype">
    <text evidence="4">Plants show abnormal leaves altered in shape and curling.</text>
</comment>
<comment type="similarity">
    <text evidence="5">Belongs to the PP2C family.</text>
</comment>
<comment type="sequence caution" evidence="5">
    <conflict type="frameshift">
        <sequence resource="EMBL-CDS" id="AAK32783"/>
    </conflict>
</comment>
<comment type="sequence caution" evidence="5">
    <conflict type="frameshift">
        <sequence resource="EMBL-CDS" id="AAM91433"/>
    </conflict>
</comment>
<sequence>MGNGVTKLSICFTGGGGERLRPKDISVLLPDPLDEGLGHSFCYVRPDPTLISSSKVHSEEDTTTTTFRTISGASVSANTATPLSTSLYDPYGHIDRAAAFESTTSFSSIPLQPIPKSSGPIVLGSGPIERGFLSGPIERGFMSGPLDRVGLFSGPLDKPNSDHHHQFQRSFSHGLALRVGSRKRSLVRILRRAISKTMSRGQNSIVAPIKSVKDSDNWGIRSEKSRNLHNENLTVNSLNFSSEVSLDDDVSLENQNLQWAQGKAGEDRVHVVVSEEHGWLFVGIYDGFNGPDAPDYLLSHLYPVVHRELKGLLWDDSNVESKSQDLERSNGDESCSNQEKDETCERWWRCEWDRESQDLDRRLKEQISRRSGSDRLTNHSEVLEALSQALRKTEEAYLDTADKMLDENPELALMGSCVLVMLMKGEDIYVMNVGDSRAVLGQKSEPDYWLAKIRQDLERINEETMMNDLEGCEGDQSSLVPNLSAFQLTVDHSTNIEEEVERIRNEHPDDVTAVTNERVKGSLKVTRAFGAGFLKQPKWNNALLEMFQIDYVGKSPYINCLPSLYHHRLGSKDRFLILSSDGLYQYFTNEEAVSEVELFITLQPEGDPAQHLVQELLFRAAKKAGMDFHELLEIPQGERRRYHDDVSIVVISLEGRMWKSCV</sequence>
<protein>
    <recommendedName>
        <fullName>Probable protein phosphatase 2C 4</fullName>
        <shortName>AtPP2C04</shortName>
        <ecNumber>3.1.3.16</ecNumber>
    </recommendedName>
    <alternativeName>
        <fullName>Protein POLTERGEIST-LIKE 5</fullName>
    </alternativeName>
    <alternativeName>
        <fullName>Protein phosphatase 2C PLL5</fullName>
        <shortName>PP2C PLL5</shortName>
    </alternativeName>
</protein>
<feature type="chain" id="PRO_0000301263" description="Probable protein phosphatase 2C 4">
    <location>
        <begin position="1"/>
        <end position="662"/>
    </location>
</feature>
<feature type="domain" description="PPM-type phosphatase" evidence="3">
    <location>
        <begin position="249"/>
        <end position="653"/>
    </location>
</feature>
<feature type="binding site" evidence="1">
    <location>
        <position position="286"/>
    </location>
    <ligand>
        <name>Mn(2+)</name>
        <dbReference type="ChEBI" id="CHEBI:29035"/>
        <label>1</label>
    </ligand>
</feature>
<feature type="binding site" evidence="1">
    <location>
        <position position="286"/>
    </location>
    <ligand>
        <name>Mn(2+)</name>
        <dbReference type="ChEBI" id="CHEBI:29035"/>
        <label>2</label>
    </ligand>
</feature>
<feature type="binding site" evidence="1">
    <location>
        <position position="287"/>
    </location>
    <ligand>
        <name>Mn(2+)</name>
        <dbReference type="ChEBI" id="CHEBI:29035"/>
        <label>1</label>
    </ligand>
</feature>
<feature type="binding site" evidence="1">
    <location>
        <position position="581"/>
    </location>
    <ligand>
        <name>Mn(2+)</name>
        <dbReference type="ChEBI" id="CHEBI:29035"/>
        <label>2</label>
    </ligand>
</feature>
<feature type="binding site" evidence="1">
    <location>
        <position position="644"/>
    </location>
    <ligand>
        <name>Mn(2+)</name>
        <dbReference type="ChEBI" id="CHEBI:29035"/>
        <label>2</label>
    </ligand>
</feature>
<feature type="modified residue" description="Phosphoserine" evidence="2">
    <location>
        <position position="153"/>
    </location>
</feature>
<feature type="sequence conflict" description="In Ref. 4; AAM61450." evidence="5" ref="4">
    <original>S</original>
    <variation>G</variation>
    <location>
        <position position="368"/>
    </location>
</feature>
<reference key="1">
    <citation type="journal article" date="2000" name="Nature">
        <title>Sequence and analysis of chromosome 1 of the plant Arabidopsis thaliana.</title>
        <authorList>
            <person name="Theologis A."/>
            <person name="Ecker J.R."/>
            <person name="Palm C.J."/>
            <person name="Federspiel N.A."/>
            <person name="Kaul S."/>
            <person name="White O."/>
            <person name="Alonso J."/>
            <person name="Altafi H."/>
            <person name="Araujo R."/>
            <person name="Bowman C.L."/>
            <person name="Brooks S.Y."/>
            <person name="Buehler E."/>
            <person name="Chan A."/>
            <person name="Chao Q."/>
            <person name="Chen H."/>
            <person name="Cheuk R.F."/>
            <person name="Chin C.W."/>
            <person name="Chung M.K."/>
            <person name="Conn L."/>
            <person name="Conway A.B."/>
            <person name="Conway A.R."/>
            <person name="Creasy T.H."/>
            <person name="Dewar K."/>
            <person name="Dunn P."/>
            <person name="Etgu P."/>
            <person name="Feldblyum T.V."/>
            <person name="Feng J.-D."/>
            <person name="Fong B."/>
            <person name="Fujii C.Y."/>
            <person name="Gill J.E."/>
            <person name="Goldsmith A.D."/>
            <person name="Haas B."/>
            <person name="Hansen N.F."/>
            <person name="Hughes B."/>
            <person name="Huizar L."/>
            <person name="Hunter J.L."/>
            <person name="Jenkins J."/>
            <person name="Johnson-Hopson C."/>
            <person name="Khan S."/>
            <person name="Khaykin E."/>
            <person name="Kim C.J."/>
            <person name="Koo H.L."/>
            <person name="Kremenetskaia I."/>
            <person name="Kurtz D.B."/>
            <person name="Kwan A."/>
            <person name="Lam B."/>
            <person name="Langin-Hooper S."/>
            <person name="Lee A."/>
            <person name="Lee J.M."/>
            <person name="Lenz C.A."/>
            <person name="Li J.H."/>
            <person name="Li Y.-P."/>
            <person name="Lin X."/>
            <person name="Liu S.X."/>
            <person name="Liu Z.A."/>
            <person name="Luros J.S."/>
            <person name="Maiti R."/>
            <person name="Marziali A."/>
            <person name="Militscher J."/>
            <person name="Miranda M."/>
            <person name="Nguyen M."/>
            <person name="Nierman W.C."/>
            <person name="Osborne B.I."/>
            <person name="Pai G."/>
            <person name="Peterson J."/>
            <person name="Pham P.K."/>
            <person name="Rizzo M."/>
            <person name="Rooney T."/>
            <person name="Rowley D."/>
            <person name="Sakano H."/>
            <person name="Salzberg S.L."/>
            <person name="Schwartz J.R."/>
            <person name="Shinn P."/>
            <person name="Southwick A.M."/>
            <person name="Sun H."/>
            <person name="Tallon L.J."/>
            <person name="Tambunga G."/>
            <person name="Toriumi M.J."/>
            <person name="Town C.D."/>
            <person name="Utterback T."/>
            <person name="Van Aken S."/>
            <person name="Vaysberg M."/>
            <person name="Vysotskaia V.S."/>
            <person name="Walker M."/>
            <person name="Wu D."/>
            <person name="Yu G."/>
            <person name="Fraser C.M."/>
            <person name="Venter J.C."/>
            <person name="Davis R.W."/>
        </authorList>
    </citation>
    <scope>NUCLEOTIDE SEQUENCE [LARGE SCALE GENOMIC DNA]</scope>
    <source>
        <strain>cv. Columbia</strain>
    </source>
</reference>
<reference key="2">
    <citation type="journal article" date="2017" name="Plant J.">
        <title>Araport11: a complete reannotation of the Arabidopsis thaliana reference genome.</title>
        <authorList>
            <person name="Cheng C.Y."/>
            <person name="Krishnakumar V."/>
            <person name="Chan A.P."/>
            <person name="Thibaud-Nissen F."/>
            <person name="Schobel S."/>
            <person name="Town C.D."/>
        </authorList>
    </citation>
    <scope>GENOME REANNOTATION</scope>
    <source>
        <strain>cv. Columbia</strain>
    </source>
</reference>
<reference key="3">
    <citation type="journal article" date="2003" name="Science">
        <title>Empirical analysis of transcriptional activity in the Arabidopsis genome.</title>
        <authorList>
            <person name="Yamada K."/>
            <person name="Lim J."/>
            <person name="Dale J.M."/>
            <person name="Chen H."/>
            <person name="Shinn P."/>
            <person name="Palm C.J."/>
            <person name="Southwick A.M."/>
            <person name="Wu H.C."/>
            <person name="Kim C.J."/>
            <person name="Nguyen M."/>
            <person name="Pham P.K."/>
            <person name="Cheuk R.F."/>
            <person name="Karlin-Newmann G."/>
            <person name="Liu S.X."/>
            <person name="Lam B."/>
            <person name="Sakano H."/>
            <person name="Wu T."/>
            <person name="Yu G."/>
            <person name="Miranda M."/>
            <person name="Quach H.L."/>
            <person name="Tripp M."/>
            <person name="Chang C.H."/>
            <person name="Lee J.M."/>
            <person name="Toriumi M.J."/>
            <person name="Chan M.M."/>
            <person name="Tang C.C."/>
            <person name="Onodera C.S."/>
            <person name="Deng J.M."/>
            <person name="Akiyama K."/>
            <person name="Ansari Y."/>
            <person name="Arakawa T."/>
            <person name="Banh J."/>
            <person name="Banno F."/>
            <person name="Bowser L."/>
            <person name="Brooks S.Y."/>
            <person name="Carninci P."/>
            <person name="Chao Q."/>
            <person name="Choy N."/>
            <person name="Enju A."/>
            <person name="Goldsmith A.D."/>
            <person name="Gurjal M."/>
            <person name="Hansen N.F."/>
            <person name="Hayashizaki Y."/>
            <person name="Johnson-Hopson C."/>
            <person name="Hsuan V.W."/>
            <person name="Iida K."/>
            <person name="Karnes M."/>
            <person name="Khan S."/>
            <person name="Koesema E."/>
            <person name="Ishida J."/>
            <person name="Jiang P.X."/>
            <person name="Jones T."/>
            <person name="Kawai J."/>
            <person name="Kamiya A."/>
            <person name="Meyers C."/>
            <person name="Nakajima M."/>
            <person name="Narusaka M."/>
            <person name="Seki M."/>
            <person name="Sakurai T."/>
            <person name="Satou M."/>
            <person name="Tamse R."/>
            <person name="Vaysberg M."/>
            <person name="Wallender E.K."/>
            <person name="Wong C."/>
            <person name="Yamamura Y."/>
            <person name="Yuan S."/>
            <person name="Shinozaki K."/>
            <person name="Davis R.W."/>
            <person name="Theologis A."/>
            <person name="Ecker J.R."/>
        </authorList>
    </citation>
    <scope>NUCLEOTIDE SEQUENCE [LARGE SCALE MRNA]</scope>
    <source>
        <strain>cv. Columbia</strain>
    </source>
</reference>
<reference key="4">
    <citation type="submission" date="2002-03" db="EMBL/GenBank/DDBJ databases">
        <title>Full-length cDNA from Arabidopsis thaliana.</title>
        <authorList>
            <person name="Brover V.V."/>
            <person name="Troukhan M.E."/>
            <person name="Alexandrov N.A."/>
            <person name="Lu Y.-P."/>
            <person name="Flavell R.B."/>
            <person name="Feldmann K.A."/>
        </authorList>
    </citation>
    <scope>NUCLEOTIDE SEQUENCE [LARGE SCALE MRNA]</scope>
</reference>
<reference key="5">
    <citation type="journal article" date="2005" name="Dev. Biol.">
        <title>POL and related phosphatases are dosage-sensitive regulators of meristem and organ development in Arabidopsis.</title>
        <authorList>
            <person name="Song S.-K."/>
            <person name="Clark S.E."/>
        </authorList>
    </citation>
    <scope>FUNCTION</scope>
    <scope>TISSUE SPECIFICITY</scope>
    <scope>GENE FAMILY</scope>
    <scope>NOMENCLATURE</scope>
    <scope>DISRUPTION PHENOTYPE</scope>
</reference>
<reference key="6">
    <citation type="journal article" date="2008" name="BMC Genomics">
        <title>Genome-wide and expression analysis of protein phosphatase 2C in rice and Arabidopsis.</title>
        <authorList>
            <person name="Xue T."/>
            <person name="Wang D."/>
            <person name="Zhang S."/>
            <person name="Ehlting J."/>
            <person name="Ni F."/>
            <person name="Jacab S."/>
            <person name="Zheng C."/>
            <person name="Zhong Y."/>
        </authorList>
    </citation>
    <scope>GENE FAMILY</scope>
    <scope>NOMENCLATURE</scope>
</reference>
<gene>
    <name type="primary">PLL5</name>
    <name type="ordered locus">At1g07630</name>
    <name type="ORF">F24B9.25</name>
    <name type="ORF">F24B9.31</name>
</gene>